<proteinExistence type="evidence at transcript level"/>
<evidence type="ECO:0000250" key="1">
    <source>
        <dbReference type="UniProtKB" id="C6EVG7"/>
    </source>
</evidence>
<evidence type="ECO:0000250" key="2">
    <source>
        <dbReference type="UniProtKB" id="Q3SAE9"/>
    </source>
</evidence>
<evidence type="ECO:0000256" key="3">
    <source>
        <dbReference type="SAM" id="MobiDB-lite"/>
    </source>
</evidence>
<evidence type="ECO:0000303" key="4">
    <source>
    </source>
</evidence>
<evidence type="ECO:0000305" key="5"/>
<evidence type="ECO:0000305" key="6">
    <source>
    </source>
</evidence>
<sequence>SGSKTANIGDGCFGVRLDHIGTTSGMGCGRPRPKPTPGGS</sequence>
<keyword id="KW-1015">Disulfide bond</keyword>
<keyword id="KW-0382">Hypotensive agent</keyword>
<keyword id="KW-0964">Secreted</keyword>
<keyword id="KW-0800">Toxin</keyword>
<keyword id="KW-0838">Vasoactive</keyword>
<keyword id="KW-0840">Vasodilator</keyword>
<accession>Q3SAF0</accession>
<feature type="propeptide" id="PRO_0000459640" evidence="5">
    <location>
        <begin position="1" status="less than"/>
        <end position="8"/>
    </location>
</feature>
<feature type="peptide" id="PRO_5000140408" description="Natriuretic peptide PpNP-b" evidence="2">
    <location>
        <begin position="9"/>
        <end position="40"/>
    </location>
</feature>
<feature type="region of interest" description="Disordered" evidence="3">
    <location>
        <begin position="20"/>
        <end position="40"/>
    </location>
</feature>
<feature type="disulfide bond" evidence="2">
    <location>
        <begin position="12"/>
        <end position="28"/>
    </location>
</feature>
<feature type="non-terminal residue">
    <location>
        <position position="1"/>
    </location>
</feature>
<comment type="function">
    <text evidence="1 2">Snake venom natriuretic peptide that targets both NPR1 and NPR2 (By similarity). Exhibits hypotensive and vasodepressor activities (By similarity).</text>
</comment>
<comment type="subcellular location">
    <subcellularLocation>
        <location evidence="6">Secreted</location>
    </subcellularLocation>
</comment>
<comment type="tissue specificity">
    <text evidence="6">Expressed by the venom gland.</text>
</comment>
<comment type="similarity">
    <text evidence="5">Belongs to the natriuretic peptide family.</text>
</comment>
<dbReference type="EMBL" id="DQ116730">
    <property type="protein sequence ID" value="AAZ82825.1"/>
    <property type="molecule type" value="mRNA"/>
</dbReference>
<dbReference type="GO" id="GO:0005576">
    <property type="term" value="C:extracellular region"/>
    <property type="evidence" value="ECO:0007669"/>
    <property type="project" value="UniProtKB-SubCell"/>
</dbReference>
<dbReference type="GO" id="GO:0005179">
    <property type="term" value="F:hormone activity"/>
    <property type="evidence" value="ECO:0007669"/>
    <property type="project" value="InterPro"/>
</dbReference>
<dbReference type="GO" id="GO:0090729">
    <property type="term" value="F:toxin activity"/>
    <property type="evidence" value="ECO:0007669"/>
    <property type="project" value="UniProtKB-KW"/>
</dbReference>
<dbReference type="GO" id="GO:0008217">
    <property type="term" value="P:regulation of blood pressure"/>
    <property type="evidence" value="ECO:0007669"/>
    <property type="project" value="UniProtKB-KW"/>
</dbReference>
<dbReference type="GO" id="GO:0042311">
    <property type="term" value="P:vasodilation"/>
    <property type="evidence" value="ECO:0007669"/>
    <property type="project" value="UniProtKB-KW"/>
</dbReference>
<dbReference type="InterPro" id="IPR000663">
    <property type="entry name" value="Natr_peptide"/>
</dbReference>
<dbReference type="InterPro" id="IPR030480">
    <property type="entry name" value="Natr_peptide_CS"/>
</dbReference>
<dbReference type="Pfam" id="PF00212">
    <property type="entry name" value="ANP"/>
    <property type="match status" value="1"/>
</dbReference>
<dbReference type="SMART" id="SM00183">
    <property type="entry name" value="NAT_PEP"/>
    <property type="match status" value="1"/>
</dbReference>
<dbReference type="PROSITE" id="PS00263">
    <property type="entry name" value="NATRIURETIC_PEPTIDE"/>
    <property type="match status" value="1"/>
</dbReference>
<organism>
    <name type="scientific">Pseudechis porphyriacus</name>
    <name type="common">Red-bellied black snake</name>
    <dbReference type="NCBI Taxonomy" id="8671"/>
    <lineage>
        <taxon>Eukaryota</taxon>
        <taxon>Metazoa</taxon>
        <taxon>Chordata</taxon>
        <taxon>Craniata</taxon>
        <taxon>Vertebrata</taxon>
        <taxon>Euteleostomi</taxon>
        <taxon>Lepidosauria</taxon>
        <taxon>Squamata</taxon>
        <taxon>Bifurcata</taxon>
        <taxon>Unidentata</taxon>
        <taxon>Episquamata</taxon>
        <taxon>Toxicofera</taxon>
        <taxon>Serpentes</taxon>
        <taxon>Colubroidea</taxon>
        <taxon>Elapidae</taxon>
        <taxon>Hydrophiinae</taxon>
        <taxon>Pseudechis</taxon>
    </lineage>
</organism>
<name>VNPB_PSEPO</name>
<protein>
    <recommendedName>
        <fullName evidence="4">Natriuretic peptide PpNP-b</fullName>
    </recommendedName>
</protein>
<reference key="1">
    <citation type="journal article" date="2006" name="Biochimie">
        <title>Cloning and characterisation of natriuretic peptides from the venom glands of Australian elapids.</title>
        <authorList>
            <person name="St Pierre L."/>
            <person name="Flight S."/>
            <person name="Masci P.P."/>
            <person name="Hanchard K.J."/>
            <person name="Lewis R.J."/>
            <person name="Alewood P.F."/>
            <person name="de Jersey J."/>
            <person name="Lavin M.F."/>
        </authorList>
    </citation>
    <scope>NUCLEOTIDE SEQUENCE [MRNA]</scope>
    <source>
        <tissue>Venom gland</tissue>
    </source>
</reference>